<feature type="chain" id="PRO_1000197827" description="UPF0178 protein CCNA_01273">
    <location>
        <begin position="1"/>
        <end position="153"/>
    </location>
</feature>
<proteinExistence type="inferred from homology"/>
<reference key="1">
    <citation type="journal article" date="2010" name="J. Bacteriol.">
        <title>The genetic basis of laboratory adaptation in Caulobacter crescentus.</title>
        <authorList>
            <person name="Marks M.E."/>
            <person name="Castro-Rojas C.M."/>
            <person name="Teiling C."/>
            <person name="Du L."/>
            <person name="Kapatral V."/>
            <person name="Walunas T.L."/>
            <person name="Crosson S."/>
        </authorList>
    </citation>
    <scope>NUCLEOTIDE SEQUENCE [LARGE SCALE GENOMIC DNA]</scope>
    <source>
        <strain>NA1000 / CB15N</strain>
    </source>
</reference>
<gene>
    <name type="ordered locus">CCNA_01273</name>
</gene>
<evidence type="ECO:0000255" key="1">
    <source>
        <dbReference type="HAMAP-Rule" id="MF_00489"/>
    </source>
</evidence>
<dbReference type="EMBL" id="CP001340">
    <property type="protein sequence ID" value="ACL94738.1"/>
    <property type="molecule type" value="Genomic_DNA"/>
</dbReference>
<dbReference type="RefSeq" id="WP_010919097.1">
    <property type="nucleotide sequence ID" value="NC_011916.1"/>
</dbReference>
<dbReference type="RefSeq" id="YP_002516646.1">
    <property type="nucleotide sequence ID" value="NC_011916.1"/>
</dbReference>
<dbReference type="GeneID" id="7333002"/>
<dbReference type="KEGG" id="ccs:CCNA_01273"/>
<dbReference type="PATRIC" id="fig|565050.3.peg.1256"/>
<dbReference type="HOGENOM" id="CLU_106619_2_1_5"/>
<dbReference type="OrthoDB" id="9798918at2"/>
<dbReference type="PhylomeDB" id="B8H4A1"/>
<dbReference type="Proteomes" id="UP000001364">
    <property type="component" value="Chromosome"/>
</dbReference>
<dbReference type="CDD" id="cd18720">
    <property type="entry name" value="PIN_YqxD-like"/>
    <property type="match status" value="1"/>
</dbReference>
<dbReference type="HAMAP" id="MF_00489">
    <property type="entry name" value="UPF0178"/>
    <property type="match status" value="1"/>
</dbReference>
<dbReference type="InterPro" id="IPR003791">
    <property type="entry name" value="UPF0178"/>
</dbReference>
<dbReference type="NCBIfam" id="NF001095">
    <property type="entry name" value="PRK00124.1"/>
    <property type="match status" value="1"/>
</dbReference>
<dbReference type="PANTHER" id="PTHR35146">
    <property type="entry name" value="UPF0178 PROTEIN YAII"/>
    <property type="match status" value="1"/>
</dbReference>
<dbReference type="PANTHER" id="PTHR35146:SF1">
    <property type="entry name" value="UPF0178 PROTEIN YAII"/>
    <property type="match status" value="1"/>
</dbReference>
<dbReference type="Pfam" id="PF02639">
    <property type="entry name" value="DUF188"/>
    <property type="match status" value="1"/>
</dbReference>
<accession>B8H4A1</accession>
<protein>
    <recommendedName>
        <fullName evidence="1">UPF0178 protein CCNA_01273</fullName>
    </recommendedName>
</protein>
<sequence>MVATLFIDADACPVKDEAYKVAARHGYKTFVVSNSWIRVPATPVIEQIVVDAGPDVADDWIAERCGPGDVVVTNDIPLADRVLKAGGAAVAPNGRVFSHDMIGSALASRSIGEHLRSMGEVTKGPAAFANADRSRFLQALDQLVVKAKRAAPR</sequence>
<keyword id="KW-1185">Reference proteome</keyword>
<comment type="similarity">
    <text evidence="1">Belongs to the UPF0178 family.</text>
</comment>
<organism>
    <name type="scientific">Caulobacter vibrioides (strain NA1000 / CB15N)</name>
    <name type="common">Caulobacter crescentus</name>
    <dbReference type="NCBI Taxonomy" id="565050"/>
    <lineage>
        <taxon>Bacteria</taxon>
        <taxon>Pseudomonadati</taxon>
        <taxon>Pseudomonadota</taxon>
        <taxon>Alphaproteobacteria</taxon>
        <taxon>Caulobacterales</taxon>
        <taxon>Caulobacteraceae</taxon>
        <taxon>Caulobacter</taxon>
    </lineage>
</organism>
<name>Y1273_CAUVN</name>